<feature type="chain" id="PRO_0000341116" description="D-alanine--D-alanine ligase">
    <location>
        <begin position="1"/>
        <end position="357"/>
    </location>
</feature>
<feature type="domain" description="ATP-grasp" evidence="2">
    <location>
        <begin position="145"/>
        <end position="339"/>
    </location>
</feature>
<feature type="binding site" evidence="2">
    <location>
        <begin position="172"/>
        <end position="225"/>
    </location>
    <ligand>
        <name>ATP</name>
        <dbReference type="ChEBI" id="CHEBI:30616"/>
    </ligand>
</feature>
<feature type="binding site" evidence="2">
    <location>
        <position position="294"/>
    </location>
    <ligand>
        <name>Mg(2+)</name>
        <dbReference type="ChEBI" id="CHEBI:18420"/>
        <label>1</label>
    </ligand>
</feature>
<feature type="binding site" evidence="2">
    <location>
        <position position="306"/>
    </location>
    <ligand>
        <name>Mg(2+)</name>
        <dbReference type="ChEBI" id="CHEBI:18420"/>
        <label>1</label>
    </ligand>
</feature>
<feature type="binding site" evidence="2">
    <location>
        <position position="306"/>
    </location>
    <ligand>
        <name>Mg(2+)</name>
        <dbReference type="ChEBI" id="CHEBI:18420"/>
        <label>2</label>
    </ligand>
</feature>
<feature type="binding site" evidence="2">
    <location>
        <position position="308"/>
    </location>
    <ligand>
        <name>Mg(2+)</name>
        <dbReference type="ChEBI" id="CHEBI:18420"/>
        <label>2</label>
    </ligand>
</feature>
<organism>
    <name type="scientific">Lacticaseibacillus paracasei (strain ATCC 334 / BCRC 17002 / CCUG 31169 / CIP 107868 / KCTC 3260 / NRRL B-441)</name>
    <name type="common">Lactobacillus paracasei</name>
    <dbReference type="NCBI Taxonomy" id="321967"/>
    <lineage>
        <taxon>Bacteria</taxon>
        <taxon>Bacillati</taxon>
        <taxon>Bacillota</taxon>
        <taxon>Bacilli</taxon>
        <taxon>Lactobacillales</taxon>
        <taxon>Lactobacillaceae</taxon>
        <taxon>Lacticaseibacillus</taxon>
    </lineage>
</organism>
<comment type="function">
    <text evidence="2">Cell wall formation.</text>
</comment>
<comment type="catalytic activity">
    <reaction evidence="2">
        <text>2 D-alanine + ATP = D-alanyl-D-alanine + ADP + phosphate + H(+)</text>
        <dbReference type="Rhea" id="RHEA:11224"/>
        <dbReference type="ChEBI" id="CHEBI:15378"/>
        <dbReference type="ChEBI" id="CHEBI:30616"/>
        <dbReference type="ChEBI" id="CHEBI:43474"/>
        <dbReference type="ChEBI" id="CHEBI:57416"/>
        <dbReference type="ChEBI" id="CHEBI:57822"/>
        <dbReference type="ChEBI" id="CHEBI:456216"/>
        <dbReference type="EC" id="6.3.2.4"/>
    </reaction>
</comment>
<comment type="cofactor">
    <cofactor evidence="1">
        <name>Mg(2+)</name>
        <dbReference type="ChEBI" id="CHEBI:18420"/>
    </cofactor>
    <cofactor evidence="1">
        <name>Mn(2+)</name>
        <dbReference type="ChEBI" id="CHEBI:29035"/>
    </cofactor>
    <text evidence="1">Binds 2 magnesium or manganese ions per subunit.</text>
</comment>
<comment type="pathway">
    <text evidence="2">Cell wall biogenesis; peptidoglycan biosynthesis.</text>
</comment>
<comment type="subcellular location">
    <subcellularLocation>
        <location evidence="2">Cytoplasm</location>
    </subcellularLocation>
</comment>
<comment type="similarity">
    <text evidence="2">Belongs to the D-alanine--D-alanine ligase family.</text>
</comment>
<keyword id="KW-0067">ATP-binding</keyword>
<keyword id="KW-0133">Cell shape</keyword>
<keyword id="KW-0961">Cell wall biogenesis/degradation</keyword>
<keyword id="KW-0963">Cytoplasm</keyword>
<keyword id="KW-0436">Ligase</keyword>
<keyword id="KW-0460">Magnesium</keyword>
<keyword id="KW-0464">Manganese</keyword>
<keyword id="KW-0479">Metal-binding</keyword>
<keyword id="KW-0547">Nucleotide-binding</keyword>
<keyword id="KW-0573">Peptidoglycan synthesis</keyword>
<keyword id="KW-1185">Reference proteome</keyword>
<dbReference type="EC" id="6.3.2.4" evidence="2"/>
<dbReference type="EMBL" id="CP000423">
    <property type="protein sequence ID" value="ABJ69007.1"/>
    <property type="molecule type" value="Genomic_DNA"/>
</dbReference>
<dbReference type="RefSeq" id="WP_003562759.1">
    <property type="nucleotide sequence ID" value="NC_008526.1"/>
</dbReference>
<dbReference type="RefSeq" id="YP_805449.1">
    <property type="nucleotide sequence ID" value="NC_008526.1"/>
</dbReference>
<dbReference type="SMR" id="Q03CR5"/>
<dbReference type="STRING" id="321967.LSEI_0143"/>
<dbReference type="PaxDb" id="321967-LSEI_0143"/>
<dbReference type="KEGG" id="lca:LSEI_0143"/>
<dbReference type="PATRIC" id="fig|321967.11.peg.166"/>
<dbReference type="HOGENOM" id="CLU_039268_1_1_9"/>
<dbReference type="UniPathway" id="UPA00219"/>
<dbReference type="Proteomes" id="UP000001651">
    <property type="component" value="Chromosome"/>
</dbReference>
<dbReference type="GO" id="GO:0005737">
    <property type="term" value="C:cytoplasm"/>
    <property type="evidence" value="ECO:0007669"/>
    <property type="project" value="UniProtKB-SubCell"/>
</dbReference>
<dbReference type="GO" id="GO:0005524">
    <property type="term" value="F:ATP binding"/>
    <property type="evidence" value="ECO:0007669"/>
    <property type="project" value="UniProtKB-KW"/>
</dbReference>
<dbReference type="GO" id="GO:0008716">
    <property type="term" value="F:D-alanine-D-alanine ligase activity"/>
    <property type="evidence" value="ECO:0007669"/>
    <property type="project" value="UniProtKB-UniRule"/>
</dbReference>
<dbReference type="GO" id="GO:0046872">
    <property type="term" value="F:metal ion binding"/>
    <property type="evidence" value="ECO:0007669"/>
    <property type="project" value="UniProtKB-KW"/>
</dbReference>
<dbReference type="GO" id="GO:0071555">
    <property type="term" value="P:cell wall organization"/>
    <property type="evidence" value="ECO:0007669"/>
    <property type="project" value="UniProtKB-KW"/>
</dbReference>
<dbReference type="GO" id="GO:0009252">
    <property type="term" value="P:peptidoglycan biosynthetic process"/>
    <property type="evidence" value="ECO:0007669"/>
    <property type="project" value="UniProtKB-UniRule"/>
</dbReference>
<dbReference type="GO" id="GO:0008360">
    <property type="term" value="P:regulation of cell shape"/>
    <property type="evidence" value="ECO:0007669"/>
    <property type="project" value="UniProtKB-KW"/>
</dbReference>
<dbReference type="Gene3D" id="3.40.50.20">
    <property type="match status" value="1"/>
</dbReference>
<dbReference type="Gene3D" id="3.30.1490.20">
    <property type="entry name" value="ATP-grasp fold, A domain"/>
    <property type="match status" value="1"/>
</dbReference>
<dbReference type="Gene3D" id="3.30.470.20">
    <property type="entry name" value="ATP-grasp fold, B domain"/>
    <property type="match status" value="1"/>
</dbReference>
<dbReference type="HAMAP" id="MF_00047">
    <property type="entry name" value="Dala_Dala_lig"/>
    <property type="match status" value="1"/>
</dbReference>
<dbReference type="InterPro" id="IPR011761">
    <property type="entry name" value="ATP-grasp"/>
</dbReference>
<dbReference type="InterPro" id="IPR013815">
    <property type="entry name" value="ATP_grasp_subdomain_1"/>
</dbReference>
<dbReference type="InterPro" id="IPR000291">
    <property type="entry name" value="D-Ala_lig_Van_CS"/>
</dbReference>
<dbReference type="InterPro" id="IPR005905">
    <property type="entry name" value="D_ala_D_ala"/>
</dbReference>
<dbReference type="InterPro" id="IPR011095">
    <property type="entry name" value="Dala_Dala_lig_C"/>
</dbReference>
<dbReference type="InterPro" id="IPR011127">
    <property type="entry name" value="Dala_Dala_lig_N"/>
</dbReference>
<dbReference type="InterPro" id="IPR016185">
    <property type="entry name" value="PreATP-grasp_dom_sf"/>
</dbReference>
<dbReference type="NCBIfam" id="TIGR01205">
    <property type="entry name" value="D_ala_D_alaTIGR"/>
    <property type="match status" value="1"/>
</dbReference>
<dbReference type="PANTHER" id="PTHR23132">
    <property type="entry name" value="D-ALANINE--D-ALANINE LIGASE"/>
    <property type="match status" value="1"/>
</dbReference>
<dbReference type="PANTHER" id="PTHR23132:SF23">
    <property type="entry name" value="D-ALANINE--D-ALANINE LIGASE B"/>
    <property type="match status" value="1"/>
</dbReference>
<dbReference type="Pfam" id="PF07478">
    <property type="entry name" value="Dala_Dala_lig_C"/>
    <property type="match status" value="1"/>
</dbReference>
<dbReference type="Pfam" id="PF01820">
    <property type="entry name" value="Dala_Dala_lig_N"/>
    <property type="match status" value="1"/>
</dbReference>
<dbReference type="PIRSF" id="PIRSF039102">
    <property type="entry name" value="Ddl/VanB"/>
    <property type="match status" value="1"/>
</dbReference>
<dbReference type="SMART" id="SM01209">
    <property type="entry name" value="GARS_A"/>
    <property type="match status" value="1"/>
</dbReference>
<dbReference type="SUPFAM" id="SSF56059">
    <property type="entry name" value="Glutathione synthetase ATP-binding domain-like"/>
    <property type="match status" value="1"/>
</dbReference>
<dbReference type="SUPFAM" id="SSF52440">
    <property type="entry name" value="PreATP-grasp domain"/>
    <property type="match status" value="1"/>
</dbReference>
<dbReference type="PROSITE" id="PS50975">
    <property type="entry name" value="ATP_GRASP"/>
    <property type="match status" value="1"/>
</dbReference>
<dbReference type="PROSITE" id="PS00843">
    <property type="entry name" value="DALA_DALA_LIGASE_1"/>
    <property type="match status" value="1"/>
</dbReference>
<protein>
    <recommendedName>
        <fullName evidence="2">D-alanine--D-alanine ligase</fullName>
        <ecNumber evidence="2">6.3.2.4</ecNumber>
    </recommendedName>
    <alternativeName>
        <fullName evidence="2">D-Ala-D-Ala ligase</fullName>
    </alternativeName>
    <alternativeName>
        <fullName evidence="2">D-alanylalanine synthetase</fullName>
    </alternativeName>
</protein>
<evidence type="ECO:0000250" key="1"/>
<evidence type="ECO:0000255" key="2">
    <source>
        <dbReference type="HAMAP-Rule" id="MF_00047"/>
    </source>
</evidence>
<name>DDL_LACP3</name>
<gene>
    <name evidence="2" type="primary">ddl</name>
    <name type="ordered locus">LSEI_0143</name>
</gene>
<reference key="1">
    <citation type="journal article" date="2006" name="Proc. Natl. Acad. Sci. U.S.A.">
        <title>Comparative genomics of the lactic acid bacteria.</title>
        <authorList>
            <person name="Makarova K.S."/>
            <person name="Slesarev A."/>
            <person name="Wolf Y.I."/>
            <person name="Sorokin A."/>
            <person name="Mirkin B."/>
            <person name="Koonin E.V."/>
            <person name="Pavlov A."/>
            <person name="Pavlova N."/>
            <person name="Karamychev V."/>
            <person name="Polouchine N."/>
            <person name="Shakhova V."/>
            <person name="Grigoriev I."/>
            <person name="Lou Y."/>
            <person name="Rohksar D."/>
            <person name="Lucas S."/>
            <person name="Huang K."/>
            <person name="Goodstein D.M."/>
            <person name="Hawkins T."/>
            <person name="Plengvidhya V."/>
            <person name="Welker D."/>
            <person name="Hughes J."/>
            <person name="Goh Y."/>
            <person name="Benson A."/>
            <person name="Baldwin K."/>
            <person name="Lee J.-H."/>
            <person name="Diaz-Muniz I."/>
            <person name="Dosti B."/>
            <person name="Smeianov V."/>
            <person name="Wechter W."/>
            <person name="Barabote R."/>
            <person name="Lorca G."/>
            <person name="Altermann E."/>
            <person name="Barrangou R."/>
            <person name="Ganesan B."/>
            <person name="Xie Y."/>
            <person name="Rawsthorne H."/>
            <person name="Tamir D."/>
            <person name="Parker C."/>
            <person name="Breidt F."/>
            <person name="Broadbent J.R."/>
            <person name="Hutkins R."/>
            <person name="O'Sullivan D."/>
            <person name="Steele J."/>
            <person name="Unlu G."/>
            <person name="Saier M.H. Jr."/>
            <person name="Klaenhammer T."/>
            <person name="Richardson P."/>
            <person name="Kozyavkin S."/>
            <person name="Weimer B.C."/>
            <person name="Mills D.A."/>
        </authorList>
    </citation>
    <scope>NUCLEOTIDE SEQUENCE [LARGE SCALE GENOMIC DNA]</scope>
    <source>
        <strain>ATCC 334 / BCRC 17002 / CCUG 31169 / CIP 107868 / KCTC 3260 / NRRL B-441</strain>
    </source>
</reference>
<sequence length="357" mass="39020">MKIVVLAGGRSTERNVSISSGYRITNALRQKGQQATFIDLFLGYDLEGKTVEQVFDDANTSKDLNISDAILTDEDINKLRPDGSTQLFGPNVMAICKAADIVFLALHGGDGENGKVQAVFDINGVKYTGSGPLASGITMNKVFSKEVMLYHGIQTSGFKEFKRDQGPKQTVPFDFPVVVKPTSGGSSVGTHIIHNQEELESGLEDVFRFDNSAIVEEFTPGREFSLGVVNGHAYSAIEIKVRSGWYDFKHKFQAGYTDFITPPKDLDEDVHQAMKDVAVQTMDVLGLQNYGRIDFFANEKGVWVIEANNLPGMTPLSLLPQEAEADGVDYGDLVMDIVNGKLKLYADGMTEAGLLTK</sequence>
<proteinExistence type="inferred from homology"/>
<accession>Q03CR5</accession>